<proteinExistence type="evidence at protein level"/>
<name>TX1AA_ECTTU</name>
<organism>
    <name type="scientific">Ectatomma tuberculatum</name>
    <name type="common">Selva ant</name>
    <dbReference type="NCBI Taxonomy" id="39300"/>
    <lineage>
        <taxon>Eukaryota</taxon>
        <taxon>Metazoa</taxon>
        <taxon>Ecdysozoa</taxon>
        <taxon>Arthropoda</taxon>
        <taxon>Hexapoda</taxon>
        <taxon>Insecta</taxon>
        <taxon>Pterygota</taxon>
        <taxon>Neoptera</taxon>
        <taxon>Endopterygota</taxon>
        <taxon>Hymenoptera</taxon>
        <taxon>Apocrita</taxon>
        <taxon>Aculeata</taxon>
        <taxon>Formicoidea</taxon>
        <taxon>Formicidae</taxon>
        <taxon>Ectatomminae</taxon>
        <taxon>Ectatommini</taxon>
        <taxon>Ectatomma</taxon>
    </lineage>
</organism>
<comment type="function">
    <text evidence="1 2">Algogenic for animals, human and insects (PubMed:7826413). At high concentrations (0.5-1 uM), it acts as a pore-forming protein that forms nonselective cation channels both in cell and artificial membranes (PubMed:7826413). It is weakly selective for cation over anions channel conductance is identical in both directions. At lower concentrations (1-10 nM), this heterodimer inhibits cardiac L-type calcium currents in isolated rat cardiac ventricular myocytes (PubMed:10336635).</text>
</comment>
<comment type="subunit">
    <text evidence="2">Heterodimer of an A and a B chain; disulfide-linked.</text>
</comment>
<comment type="subcellular location">
    <subcellularLocation>
        <location evidence="2">Secreted</location>
    </subcellularLocation>
    <subcellularLocation>
        <location evidence="8">Target cell membrane</location>
    </subcellularLocation>
</comment>
<comment type="tissue specificity">
    <text evidence="8">Expressed by the venom gland.</text>
</comment>
<comment type="toxic dose">
    <text evidence="2">LD(50) is 6.8 ug/kg by intracerebroventricular injection into mice.</text>
</comment>
<comment type="similarity">
    <text evidence="7">Belongs to the ectatomin family. Ectatomin-Et subfamily.</text>
</comment>
<sequence>GVIPKKIWETVCPTVEPWAKKCSGDIATYIKRECGKL</sequence>
<protein>
    <recommendedName>
        <fullName evidence="5">Omega/M-ectatotoxin-Et1a subunit A</fullName>
        <shortName evidence="5">Omega/M-ECTX-Et1a subunit A</shortName>
    </recommendedName>
    <alternativeName>
        <fullName evidence="6">Ectatomin subunit A</fullName>
        <shortName>EA</shortName>
    </alternativeName>
    <alternativeName>
        <fullName evidence="5">Ectatomin-Et1 subunit A</fullName>
    </alternativeName>
</protein>
<keyword id="KW-0002">3D-structure</keyword>
<keyword id="KW-0108">Calcium channel impairing toxin</keyword>
<keyword id="KW-0903">Direct protein sequencing</keyword>
<keyword id="KW-1015">Disulfide bond</keyword>
<keyword id="KW-0407">Ion channel</keyword>
<keyword id="KW-0872">Ion channel impairing toxin</keyword>
<keyword id="KW-0406">Ion transport</keyword>
<keyword id="KW-0472">Membrane</keyword>
<keyword id="KW-0964">Secreted</keyword>
<keyword id="KW-1052">Target cell membrane</keyword>
<keyword id="KW-1053">Target membrane</keyword>
<keyword id="KW-0800">Toxin</keyword>
<keyword id="KW-0813">Transport</keyword>
<keyword id="KW-1218">Voltage-gated calcium channel impairing toxin</keyword>
<feature type="peptide" id="PRO_0000044887" description="Omega/M-ectatotoxin-Et1a subunit A" evidence="2">
    <location>
        <begin position="1"/>
        <end position="37"/>
    </location>
</feature>
<feature type="disulfide bond" evidence="2 3 4 9">
    <location>
        <begin position="12"/>
        <end position="34"/>
    </location>
</feature>
<feature type="disulfide bond" description="Interchain (with C-20 in subunit B)" evidence="2 3 4 9">
    <location>
        <position position="22"/>
    </location>
</feature>
<feature type="helix" evidence="10">
    <location>
        <begin position="5"/>
        <end position="20"/>
    </location>
</feature>
<feature type="helix" evidence="10">
    <location>
        <begin position="24"/>
        <end position="35"/>
    </location>
</feature>
<accession>P49343</accession>
<reference key="1">
    <citation type="journal article" date="1994" name="Bioorg. Khim.">
        <title>Structure-activity study of the basic toxic component of venom from the ant Ectatomma tuberculatum.</title>
        <authorList>
            <person name="Pluzhnikov K.A."/>
            <person name="Nolde D.E."/>
            <person name="Tertishnikova S.M."/>
            <person name="Sukhanov S.V."/>
            <person name="Sobol A.G."/>
            <person name="Torgov M.Y."/>
            <person name="Filippov A.K."/>
            <person name="Arseniev A.S."/>
            <person name="Grishin E.V."/>
        </authorList>
    </citation>
    <scope>PROTEIN SEQUENCE</scope>
    <scope>FUNCTION</scope>
    <scope>TOXIC DOSE</scope>
    <scope>STRUCTURE BY NMR</scope>
    <scope>DISULFIDE BOND</scope>
    <scope>SUBCELLULAR LOCATION</scope>
    <scope>SUBUNIT</scope>
    <source>
        <tissue>Venom</tissue>
    </source>
</reference>
<reference key="2">
    <citation type="journal article" date="1999" name="Eur. J. Biochem.">
        <title>Analysis of ectatomin action on cell membranes.</title>
        <authorList>
            <person name="Pluzhnikov K."/>
            <person name="Nosyreva E."/>
            <person name="Shevchenko L."/>
            <person name="Kokoz Y."/>
            <person name="Schmalz D."/>
            <person name="Hucho F."/>
            <person name="Grishin E."/>
        </authorList>
    </citation>
    <scope>FUNCTION</scope>
    <scope>EFFECT ON CARDIAC L-TYPE CALCIUM CURRENT</scope>
</reference>
<reference key="3">
    <citation type="journal article" date="2016" name="Toxins">
        <title>The biochemical toxin arsenal from ant venoms.</title>
        <authorList>
            <person name="Touchard A."/>
            <person name="Aili S.R."/>
            <person name="Fox E.G."/>
            <person name="Escoubas P."/>
            <person name="Orivel J."/>
            <person name="Nicholson G.M."/>
            <person name="Dejean A."/>
        </authorList>
    </citation>
    <scope>REVIEW</scope>
    <scope>NOMENCLATURE</scope>
</reference>
<reference key="4">
    <citation type="journal article" date="1994" name="FEBS Lett.">
        <title>Toxic principle of selva ant venom is a pore-forming protein transformer.</title>
        <authorList>
            <person name="Arseniev A.S."/>
            <person name="Pluzhnikov K.A."/>
            <person name="Nolde D.E."/>
            <person name="Sobol A.G."/>
            <person name="Torgov M.Y."/>
            <person name="Sukhanov S.V."/>
            <person name="Grishin E.V."/>
        </authorList>
    </citation>
    <scope>STRUCTURE BY NMR</scope>
    <scope>DISULFIDE BOND</scope>
</reference>
<reference key="5">
    <citation type="journal article" date="1995" name="J. Biomol. NMR">
        <title>Three-dimensional structure of ectatomin from Ectatomma tuberculatum ant venom.</title>
        <authorList>
            <person name="Nolde D.E."/>
            <person name="Sobol A.G."/>
            <person name="Pluzhnikov K.A."/>
            <person name="Grishin E.V."/>
            <person name="Arseniev A.S."/>
        </authorList>
    </citation>
    <scope>STRUCTURE BY NMR</scope>
    <scope>DISULFIDE BOND</scope>
</reference>
<evidence type="ECO:0000269" key="1">
    <source>
    </source>
</evidence>
<evidence type="ECO:0000269" key="2">
    <source>
    </source>
</evidence>
<evidence type="ECO:0000269" key="3">
    <source>
    </source>
</evidence>
<evidence type="ECO:0000269" key="4">
    <source>
    </source>
</evidence>
<evidence type="ECO:0000303" key="5">
    <source>
    </source>
</evidence>
<evidence type="ECO:0000303" key="6">
    <source>
    </source>
</evidence>
<evidence type="ECO:0000305" key="7"/>
<evidence type="ECO:0000305" key="8">
    <source>
    </source>
</evidence>
<evidence type="ECO:0000312" key="9">
    <source>
        <dbReference type="PDB" id="1ECI"/>
    </source>
</evidence>
<evidence type="ECO:0007829" key="10">
    <source>
        <dbReference type="PDB" id="1ECI"/>
    </source>
</evidence>
<dbReference type="PIR" id="S46244">
    <property type="entry name" value="S46244"/>
</dbReference>
<dbReference type="PDB" id="1ECI">
    <property type="method" value="NMR"/>
    <property type="chains" value="A=1-37"/>
</dbReference>
<dbReference type="PDBsum" id="1ECI"/>
<dbReference type="SMR" id="P49343"/>
<dbReference type="MINT" id="P49343"/>
<dbReference type="EvolutionaryTrace" id="P49343"/>
<dbReference type="GO" id="GO:0005576">
    <property type="term" value="C:extracellular region"/>
    <property type="evidence" value="ECO:0007669"/>
    <property type="project" value="UniProtKB-SubCell"/>
</dbReference>
<dbReference type="GO" id="GO:0016020">
    <property type="term" value="C:membrane"/>
    <property type="evidence" value="ECO:0007669"/>
    <property type="project" value="UniProtKB-KW"/>
</dbReference>
<dbReference type="GO" id="GO:0044218">
    <property type="term" value="C:other organism cell membrane"/>
    <property type="evidence" value="ECO:0007669"/>
    <property type="project" value="UniProtKB-KW"/>
</dbReference>
<dbReference type="GO" id="GO:0005246">
    <property type="term" value="F:calcium channel regulator activity"/>
    <property type="evidence" value="ECO:0007669"/>
    <property type="project" value="UniProtKB-KW"/>
</dbReference>
<dbReference type="GO" id="GO:0005216">
    <property type="term" value="F:monoatomic ion channel activity"/>
    <property type="evidence" value="ECO:0007669"/>
    <property type="project" value="InterPro"/>
</dbReference>
<dbReference type="GO" id="GO:0090729">
    <property type="term" value="F:toxin activity"/>
    <property type="evidence" value="ECO:0007669"/>
    <property type="project" value="UniProtKB-KW"/>
</dbReference>
<dbReference type="InterPro" id="IPR009458">
    <property type="entry name" value="Ectatomin"/>
</dbReference>
<dbReference type="InterPro" id="IPR036261">
    <property type="entry name" value="Ectatomin_sf"/>
</dbReference>
<dbReference type="Pfam" id="PF06457">
    <property type="entry name" value="Ectatomin"/>
    <property type="match status" value="1"/>
</dbReference>
<dbReference type="PIRSF" id="PIRSF005989">
    <property type="entry name" value="Ectatomin"/>
    <property type="match status" value="1"/>
</dbReference>
<dbReference type="SUPFAM" id="SSF47401">
    <property type="entry name" value="Ectatomin subunits"/>
    <property type="match status" value="1"/>
</dbReference>